<name>ERG3_LEPMC</name>
<evidence type="ECO:0000250" key="1"/>
<evidence type="ECO:0000250" key="2">
    <source>
        <dbReference type="UniProtKB" id="P32353"/>
    </source>
</evidence>
<evidence type="ECO:0000255" key="3"/>
<evidence type="ECO:0000305" key="4"/>
<proteinExistence type="inferred from homology"/>
<dbReference type="EC" id="1.14.19.20"/>
<dbReference type="EMBL" id="AY137770">
    <property type="protein sequence ID" value="AAN27998.1"/>
    <property type="molecule type" value="Genomic_DNA"/>
</dbReference>
<dbReference type="UniPathway" id="UPA00768">
    <property type="reaction ID" value="UER00762"/>
</dbReference>
<dbReference type="GO" id="GO:0005789">
    <property type="term" value="C:endoplasmic reticulum membrane"/>
    <property type="evidence" value="ECO:0007669"/>
    <property type="project" value="UniProtKB-SubCell"/>
</dbReference>
<dbReference type="GO" id="GO:0050046">
    <property type="term" value="F:delta7-sterol 5(6)-desaturase activity"/>
    <property type="evidence" value="ECO:0007669"/>
    <property type="project" value="UniProtKB-EC"/>
</dbReference>
<dbReference type="GO" id="GO:0005506">
    <property type="term" value="F:iron ion binding"/>
    <property type="evidence" value="ECO:0007669"/>
    <property type="project" value="InterPro"/>
</dbReference>
<dbReference type="GO" id="GO:0016126">
    <property type="term" value="P:sterol biosynthetic process"/>
    <property type="evidence" value="ECO:0007669"/>
    <property type="project" value="UniProtKB-UniPathway"/>
</dbReference>
<dbReference type="InterPro" id="IPR006694">
    <property type="entry name" value="Fatty_acid_hydroxylase"/>
</dbReference>
<dbReference type="InterPro" id="IPR050307">
    <property type="entry name" value="Sterol_Desaturase_Related"/>
</dbReference>
<dbReference type="PANTHER" id="PTHR11863">
    <property type="entry name" value="STEROL DESATURASE"/>
    <property type="match status" value="1"/>
</dbReference>
<dbReference type="Pfam" id="PF04116">
    <property type="entry name" value="FA_hydroxylase"/>
    <property type="match status" value="1"/>
</dbReference>
<feature type="chain" id="PRO_0000117023" description="Delta(7)-sterol 5(6)-desaturase">
    <location>
        <begin position="1"/>
        <end position="356"/>
    </location>
</feature>
<feature type="transmembrane region" description="Helical" evidence="3">
    <location>
        <begin position="87"/>
        <end position="107"/>
    </location>
</feature>
<feature type="transmembrane region" description="Helical" evidence="3">
    <location>
        <begin position="134"/>
        <end position="154"/>
    </location>
</feature>
<feature type="transmembrane region" description="Helical" evidence="3">
    <location>
        <begin position="171"/>
        <end position="191"/>
    </location>
</feature>
<feature type="transmembrane region" description="Helical" evidence="3">
    <location>
        <begin position="235"/>
        <end position="255"/>
    </location>
</feature>
<feature type="domain" description="Fatty acid hydroxylase" evidence="3">
    <location>
        <begin position="179"/>
        <end position="303"/>
    </location>
</feature>
<feature type="short sequence motif" description="Histidine box-1">
    <location>
        <begin position="192"/>
        <end position="196"/>
    </location>
</feature>
<feature type="short sequence motif" description="Histidine box-2">
    <location>
        <begin position="205"/>
        <end position="209"/>
    </location>
</feature>
<feature type="short sequence motif" description="Histidine box-3">
    <location>
        <begin position="280"/>
        <end position="284"/>
    </location>
</feature>
<accession>Q8J207</accession>
<gene>
    <name type="primary">ERG3</name>
</gene>
<organism>
    <name type="scientific">Leptosphaeria maculans</name>
    <name type="common">Blackleg fungus</name>
    <name type="synonym">Phoma lingam</name>
    <dbReference type="NCBI Taxonomy" id="5022"/>
    <lineage>
        <taxon>Eukaryota</taxon>
        <taxon>Fungi</taxon>
        <taxon>Dikarya</taxon>
        <taxon>Ascomycota</taxon>
        <taxon>Pezizomycotina</taxon>
        <taxon>Dothideomycetes</taxon>
        <taxon>Pleosporomycetidae</taxon>
        <taxon>Pleosporales</taxon>
        <taxon>Pleosporineae</taxon>
        <taxon>Leptosphaeriaceae</taxon>
        <taxon>Plenodomus</taxon>
        <taxon>Plenodomus lingam/Leptosphaeria maculans species complex</taxon>
    </lineage>
</organism>
<comment type="function">
    <text evidence="2">Catalyzes the introduction of a C-5 double bond in the B ring of ergosterol. May contribute to the regulation of ergosterol biosynthesis.</text>
</comment>
<comment type="catalytic activity">
    <reaction evidence="2">
        <text>a Delta(7)-sterol + 2 Fe(II)-[cytochrome b5] + O2 + 2 H(+) = a Delta(5),Delta(7)-sterol + 2 Fe(III)-[cytochrome b5] + 2 H2O</text>
        <dbReference type="Rhea" id="RHEA:54320"/>
        <dbReference type="Rhea" id="RHEA-COMP:10438"/>
        <dbReference type="Rhea" id="RHEA-COMP:10439"/>
        <dbReference type="ChEBI" id="CHEBI:15377"/>
        <dbReference type="ChEBI" id="CHEBI:15378"/>
        <dbReference type="ChEBI" id="CHEBI:15379"/>
        <dbReference type="ChEBI" id="CHEBI:29033"/>
        <dbReference type="ChEBI" id="CHEBI:29034"/>
        <dbReference type="ChEBI" id="CHEBI:138130"/>
        <dbReference type="ChEBI" id="CHEBI:138131"/>
        <dbReference type="EC" id="1.14.19.20"/>
    </reaction>
</comment>
<comment type="cofactor">
    <cofactor evidence="1">
        <name>Fe cation</name>
        <dbReference type="ChEBI" id="CHEBI:24875"/>
    </cofactor>
</comment>
<comment type="pathway">
    <text>Steroid metabolism; ergosterol biosynthesis; ergosterol from zymosterol: step 3/5.</text>
</comment>
<comment type="subcellular location">
    <subcellularLocation>
        <location evidence="4">Endoplasmic reticulum membrane</location>
        <topology evidence="4">Multi-pass membrane protein</topology>
    </subcellularLocation>
</comment>
<comment type="domain">
    <text>The histidine box domains may contain the active site and/or be involved in metal ion binding.</text>
</comment>
<comment type="similarity">
    <text evidence="4">Belongs to the sterol desaturase family.</text>
</comment>
<keyword id="KW-0256">Endoplasmic reticulum</keyword>
<keyword id="KW-0408">Iron</keyword>
<keyword id="KW-0444">Lipid biosynthesis</keyword>
<keyword id="KW-0443">Lipid metabolism</keyword>
<keyword id="KW-0472">Membrane</keyword>
<keyword id="KW-0560">Oxidoreductase</keyword>
<keyword id="KW-0752">Steroid biosynthesis</keyword>
<keyword id="KW-0753">Steroid metabolism</keyword>
<keyword id="KW-0756">Sterol biosynthesis</keyword>
<keyword id="KW-1207">Sterol metabolism</keyword>
<keyword id="KW-0812">Transmembrane</keyword>
<keyword id="KW-1133">Transmembrane helix</keyword>
<sequence>MDIVLEVCDTFLFDPLYATLLPAQASSFTANATANATLSSIRQEPTAYALPHASWQYEPATKYFSIEPSKYAYMSSWPRDDWRRQALTLYLITWLFGVCVYYLFAGLSYLLVFDKATFNHPRYLKHQIKLEMKQANIAFPIMAIFTVPWFLAEVRGYSKLYDTTEKGPGRWYDYLQIPFFIAFTDLCIYWIHRGLHHPMVYKHIHKPHHKWIMPTPFASHAFHPIDGYAQGLPYYIFPFLFPLSKIASVAFFVFVNIWTVLIHDGEYAHNSPIINGAACHTMHHLYFNYNYGQFTTLWDRLGGSYRKPNDELFKRELKMCQDEWNKQAKAVDMMVEQVEGENDRSYQGEPESKKVQ</sequence>
<reference key="1">
    <citation type="journal article" date="2002" name="FEMS Microbiol. Lett.">
        <title>Transcription of sterol delta 5,6-desaturase and sterol 14alpha-demethylase is induced in the plant pathogenic ascomycete, Leptosphaeria maculans, during treatment with a triazole fungicide.</title>
        <authorList>
            <person name="Griffiths K.M."/>
            <person name="Howlett B.J."/>
        </authorList>
    </citation>
    <scope>NUCLEOTIDE SEQUENCE [GENOMIC DNA]</scope>
</reference>
<protein>
    <recommendedName>
        <fullName>Delta(7)-sterol 5(6)-desaturase</fullName>
        <ecNumber>1.14.19.20</ecNumber>
    </recommendedName>
    <alternativeName>
        <fullName>C-5 sterol desaturase</fullName>
    </alternativeName>
    <alternativeName>
        <fullName>Ergosterol Delta(5,6) desaturase</fullName>
    </alternativeName>
    <alternativeName>
        <fullName>Sterol-C5-desaturase</fullName>
    </alternativeName>
</protein>